<gene>
    <name type="ORF">V1</name>
</gene>
<keyword id="KW-0167">Capsid protein</keyword>
<keyword id="KW-0238">DNA-binding</keyword>
<keyword id="KW-1048">Host nucleus</keyword>
<keyword id="KW-1185">Reference proteome</keyword>
<keyword id="KW-1140">T=1 icosahedral capsid protein</keyword>
<keyword id="KW-1163">Viral penetration into host nucleus</keyword>
<keyword id="KW-0946">Virion</keyword>
<keyword id="KW-1160">Virus entry into host cell</keyword>
<accession>Q88886</accession>
<organismHost>
    <name type="scientific">Solanum lycopersicum</name>
    <name type="common">Tomato</name>
    <name type="synonym">Lycopersicon esculentum</name>
    <dbReference type="NCBI Taxonomy" id="4081"/>
</organismHost>
<organismHost>
    <name type="scientific">Solanum nigrum</name>
    <name type="common">Black nightshade</name>
    <dbReference type="NCBI Taxonomy" id="4112"/>
</organismHost>
<feature type="chain" id="PRO_0000323677" description="Capsid protein">
    <location>
        <begin position="1"/>
        <end position="242"/>
    </location>
</feature>
<feature type="short sequence motif" description="Bipartite nuclear localization signal" evidence="2">
    <location>
        <begin position="1"/>
        <end position="42"/>
    </location>
</feature>
<evidence type="ECO:0000250" key="1"/>
<evidence type="ECO:0000255" key="2"/>
<evidence type="ECO:0000305" key="3"/>
<comment type="function">
    <text evidence="1">Encapsidates the viral genome into characteristic twinned ('geminate') particles. Binds the genomic viral ssDNA and shuttles it into and out of the cell nucleus. Plays a role in protection of the genome from degradation, virus acquisition and transmission by insect vectors, infectivity, and systemic movement. The CP of monopartite geminiviruses is absolutely essential for virus movement (By similarity).</text>
</comment>
<comment type="subunit">
    <text evidence="1">Homomultimer. Binds to single-stranded and double-stranded viral DNA. Interacts (via nuclear localization signal) with host importin alpha-1a (By similarity).</text>
</comment>
<comment type="subcellular location">
    <subcellularLocation>
        <location evidence="1">Virion</location>
    </subcellularLocation>
    <subcellularLocation>
        <location evidence="1">Host nucleus</location>
    </subcellularLocation>
    <text evidence="1">It is actively transported into the host cell nucleus. It may be exported out of the nucleus through a nuclear export signal for cell-to-cell movement and spread (By similarity).</text>
</comment>
<comment type="similarity">
    <text evidence="3">Belongs to the geminiviridae capsid protein family.</text>
</comment>
<proteinExistence type="inferred from homology"/>
<reference key="1">
    <citation type="journal article" date="1996" name="Virology">
        <title>Analysis of the nucleotide sequence of the treehopper-transmitted geminivirus, tomato pseudo-curly top virus, suggests a recombinant origin.</title>
        <authorList>
            <person name="Briddon R.W."/>
            <person name="Bedford I.D."/>
            <person name="Tsai J.H."/>
            <person name="Markham P.G."/>
        </authorList>
    </citation>
    <scope>NUCLEOTIDE SEQUENCE [GENOMIC DNA]</scope>
</reference>
<dbReference type="EMBL" id="X84735">
    <property type="protein sequence ID" value="CAA59221.1"/>
    <property type="molecule type" value="Genomic_DNA"/>
</dbReference>
<dbReference type="SMR" id="Q88886"/>
<dbReference type="KEGG" id="vg:944410"/>
<dbReference type="OrthoDB" id="24148at10239"/>
<dbReference type="Proteomes" id="UP000007068">
    <property type="component" value="Genome"/>
</dbReference>
<dbReference type="GO" id="GO:0043657">
    <property type="term" value="C:host cell"/>
    <property type="evidence" value="ECO:0007669"/>
    <property type="project" value="GOC"/>
</dbReference>
<dbReference type="GO" id="GO:0042025">
    <property type="term" value="C:host cell nucleus"/>
    <property type="evidence" value="ECO:0007669"/>
    <property type="project" value="UniProtKB-SubCell"/>
</dbReference>
<dbReference type="GO" id="GO:0039615">
    <property type="term" value="C:T=1 icosahedral viral capsid"/>
    <property type="evidence" value="ECO:0007669"/>
    <property type="project" value="UniProtKB-KW"/>
</dbReference>
<dbReference type="GO" id="GO:0003677">
    <property type="term" value="F:DNA binding"/>
    <property type="evidence" value="ECO:0007669"/>
    <property type="project" value="UniProtKB-KW"/>
</dbReference>
<dbReference type="GO" id="GO:0005198">
    <property type="term" value="F:structural molecule activity"/>
    <property type="evidence" value="ECO:0007669"/>
    <property type="project" value="InterPro"/>
</dbReference>
<dbReference type="GO" id="GO:0046718">
    <property type="term" value="P:symbiont entry into host cell"/>
    <property type="evidence" value="ECO:0007669"/>
    <property type="project" value="UniProtKB-KW"/>
</dbReference>
<dbReference type="GO" id="GO:0075732">
    <property type="term" value="P:viral penetration into host nucleus"/>
    <property type="evidence" value="ECO:0007669"/>
    <property type="project" value="UniProtKB-KW"/>
</dbReference>
<dbReference type="Gene3D" id="2.60.120.20">
    <property type="match status" value="1"/>
</dbReference>
<dbReference type="InterPro" id="IPR000263">
    <property type="entry name" value="GV_A/BR1_coat"/>
</dbReference>
<dbReference type="InterPro" id="IPR029053">
    <property type="entry name" value="Viral_coat"/>
</dbReference>
<dbReference type="Pfam" id="PF00844">
    <property type="entry name" value="Gemini_coat"/>
    <property type="match status" value="1"/>
</dbReference>
<protein>
    <recommendedName>
        <fullName>Capsid protein</fullName>
    </recommendedName>
    <alternativeName>
        <fullName>Coat protein</fullName>
        <shortName>CP</shortName>
    </alternativeName>
</protein>
<organism>
    <name type="scientific">Tomato pseudo-curly top virus</name>
    <name type="common">TPCTV</name>
    <dbReference type="NCBI Taxonomy" id="49267"/>
    <lineage>
        <taxon>Viruses</taxon>
        <taxon>Monodnaviria</taxon>
        <taxon>Shotokuvirae</taxon>
        <taxon>Cressdnaviricota</taxon>
        <taxon>Repensiviricetes</taxon>
        <taxon>Geplafuvirales</taxon>
        <taxon>Geminiviridae</taxon>
        <taxon>Topocuvirus</taxon>
    </lineage>
</organism>
<sequence length="242" mass="26922">MPYKRKLTSYFPQSKRFRGAKSGMAVVKTSASRRLYKKGKRKPDRIKTYTYAFSSICTDKGTIVYMNSWSLGLGPQQRSSDIEILKSMYIRLTVALSENAASQVKTYVVKWALIVDQVPGETLVGVADVYKTCPSPYPYVQCAYIADDNHSRFQVLRSGFLSLSGNGLAVGSSTRTGCPAMKNMASINKFCKNLNVRCVYDADSATGDIASIKRGAVYLVIWPDVEIRYGFSCTMYHRNGNA</sequence>
<name>CAPSD_TPCTV</name>